<comment type="subunit">
    <text evidence="1">Component of the mitochondrial ribosome small subunit (28S) which comprises a 12S rRNA and about 30 distinct proteins.</text>
</comment>
<comment type="subcellular location">
    <subcellularLocation>
        <location evidence="1">Mitochondrion</location>
    </subcellularLocation>
</comment>
<comment type="similarity">
    <text evidence="2">Belongs to the mitochondrion-specific ribosomal protein mS25 family.</text>
</comment>
<keyword id="KW-0002">3D-structure</keyword>
<keyword id="KW-0903">Direct protein sequencing</keyword>
<keyword id="KW-0496">Mitochondrion</keyword>
<keyword id="KW-1185">Reference proteome</keyword>
<keyword id="KW-0687">Ribonucleoprotein</keyword>
<keyword id="KW-0689">Ribosomal protein</keyword>
<name>RT25_BOVIN</name>
<sequence length="173" mass="20055">MPMKGRFPIRRTLQYLSQGDVVFKDSVKVMTVNYNTHGELGEGARKFVFFNIPQIQYKNPWVQIMLFKNMTPTPFLRFYLDSGEQVLVDVETKSNKEIMEHVKKILGKNEETLRRERQEREQLSHPAHFGPRKYCLRECICEVEGQVPCPAVVPLPRELTGKFQAALRAGAQD</sequence>
<evidence type="ECO:0000269" key="1">
    <source>
    </source>
</evidence>
<evidence type="ECO:0000305" key="2"/>
<evidence type="ECO:0007744" key="3">
    <source>
        <dbReference type="PDB" id="3JD5"/>
    </source>
</evidence>
<evidence type="ECO:0007829" key="4">
    <source>
        <dbReference type="PDB" id="6NEQ"/>
    </source>
</evidence>
<evidence type="ECO:0007829" key="5">
    <source>
        <dbReference type="PDB" id="6NF8"/>
    </source>
</evidence>
<reference key="1">
    <citation type="submission" date="2005-10" db="EMBL/GenBank/DDBJ databases">
        <authorList>
            <consortium name="NIH - Mammalian Gene Collection (MGC) project"/>
        </authorList>
    </citation>
    <scope>NUCLEOTIDE SEQUENCE [LARGE SCALE MRNA]</scope>
    <source>
        <strain>Crossbred X Angus</strain>
        <tissue>Liver</tissue>
    </source>
</reference>
<reference key="2">
    <citation type="journal article" date="2000" name="J. Biol. Chem.">
        <title>A proteomics approach to the identification of mammalian mitochondrial small subunit ribosomal proteins.</title>
        <authorList>
            <person name="Koc E.C."/>
            <person name="Burkhart W."/>
            <person name="Blackburn K."/>
            <person name="Moseley A."/>
            <person name="Koc H."/>
            <person name="Spremulli L.L."/>
        </authorList>
    </citation>
    <scope>PROTEIN SEQUENCE OF 29-44 AND 77-93</scope>
    <source>
        <tissue>Liver</tissue>
    </source>
</reference>
<reference evidence="3" key="3">
    <citation type="journal article" date="2014" name="Proc. Natl. Acad. Sci. U.S.A.">
        <title>Cryo-EM structure of the small subunit of the mammalian mitochondrial ribosome.</title>
        <authorList>
            <person name="Kaushal P.S."/>
            <person name="Sharma M.R."/>
            <person name="Booth T.M."/>
            <person name="Haque E.M."/>
            <person name="Tung C.S."/>
            <person name="Sanbonmatsu K.Y."/>
            <person name="Spremulli L.L."/>
            <person name="Agrawal R.K."/>
        </authorList>
    </citation>
    <scope>STRUCTURE BY ELECTRON MICROSCOPY (7.00 ANGSTROMS)</scope>
    <scope>SUBCELLULAR LOCATION</scope>
    <scope>SUBUNIT</scope>
</reference>
<feature type="chain" id="PRO_0000087707" description="Small ribosomal subunit protein mS25">
    <location>
        <begin position="1"/>
        <end position="173"/>
    </location>
</feature>
<feature type="strand" evidence="4">
    <location>
        <begin position="4"/>
        <end position="6"/>
    </location>
</feature>
<feature type="turn" evidence="4">
    <location>
        <begin position="8"/>
        <end position="11"/>
    </location>
</feature>
<feature type="helix" evidence="4">
    <location>
        <begin position="13"/>
        <end position="16"/>
    </location>
</feature>
<feature type="strand" evidence="4">
    <location>
        <begin position="27"/>
        <end position="34"/>
    </location>
</feature>
<feature type="strand" evidence="5">
    <location>
        <begin position="36"/>
        <end position="39"/>
    </location>
</feature>
<feature type="helix" evidence="4">
    <location>
        <begin position="42"/>
        <end position="57"/>
    </location>
</feature>
<feature type="strand" evidence="4">
    <location>
        <begin position="62"/>
        <end position="70"/>
    </location>
</feature>
<feature type="strand" evidence="4">
    <location>
        <begin position="75"/>
        <end position="83"/>
    </location>
</feature>
<feature type="strand" evidence="4">
    <location>
        <begin position="85"/>
        <end position="89"/>
    </location>
</feature>
<feature type="helix" evidence="4">
    <location>
        <begin position="95"/>
        <end position="105"/>
    </location>
</feature>
<feature type="helix" evidence="4">
    <location>
        <begin position="110"/>
        <end position="123"/>
    </location>
</feature>
<feature type="turn" evidence="4">
    <location>
        <begin position="132"/>
        <end position="134"/>
    </location>
</feature>
<feature type="strand" evidence="4">
    <location>
        <begin position="135"/>
        <end position="138"/>
    </location>
</feature>
<feature type="helix" evidence="4">
    <location>
        <begin position="140"/>
        <end position="142"/>
    </location>
</feature>
<feature type="turn" evidence="4">
    <location>
        <begin position="150"/>
        <end position="152"/>
    </location>
</feature>
<feature type="helix" evidence="4">
    <location>
        <begin position="161"/>
        <end position="167"/>
    </location>
</feature>
<accession>P82669</accession>
<accession>Q32P88</accession>
<proteinExistence type="evidence at protein level"/>
<protein>
    <recommendedName>
        <fullName evidence="2">Small ribosomal subunit protein mS25</fullName>
    </recommendedName>
    <alternativeName>
        <fullName>28S ribosomal protein S25, mitochondrial</fullName>
        <shortName>MRP-S25</shortName>
        <shortName>S25mt</shortName>
    </alternativeName>
</protein>
<dbReference type="EMBL" id="BC108214">
    <property type="protein sequence ID" value="AAI08215.1"/>
    <property type="molecule type" value="mRNA"/>
</dbReference>
<dbReference type="RefSeq" id="NP_001069447.1">
    <property type="nucleotide sequence ID" value="NM_001075979.2"/>
</dbReference>
<dbReference type="PDB" id="3JD5">
    <property type="method" value="EM"/>
    <property type="resolution" value="7.00 A"/>
    <property type="chains" value="c=1-173"/>
</dbReference>
<dbReference type="PDB" id="6NEQ">
    <property type="method" value="EM"/>
    <property type="resolution" value="3.32 A"/>
    <property type="chains" value="c=1-173"/>
</dbReference>
<dbReference type="PDB" id="6NF8">
    <property type="method" value="EM"/>
    <property type="resolution" value="3.48 A"/>
    <property type="chains" value="c=1-173"/>
</dbReference>
<dbReference type="PDBsum" id="3JD5"/>
<dbReference type="PDBsum" id="6NEQ"/>
<dbReference type="PDBsum" id="6NF8"/>
<dbReference type="EMDB" id="EMD-9358"/>
<dbReference type="EMDB" id="EMD-9362"/>
<dbReference type="SMR" id="P82669"/>
<dbReference type="CORUM" id="P82669"/>
<dbReference type="FunCoup" id="P82669">
    <property type="interactions" value="1985"/>
</dbReference>
<dbReference type="IntAct" id="P82669">
    <property type="interactions" value="1"/>
</dbReference>
<dbReference type="STRING" id="9913.ENSBTAP00000018234"/>
<dbReference type="PaxDb" id="9913-ENSBTAP00000018234"/>
<dbReference type="Ensembl" id="ENSBTAT00000018234.5">
    <property type="protein sequence ID" value="ENSBTAP00000018234.3"/>
    <property type="gene ID" value="ENSBTAG00000013723.5"/>
</dbReference>
<dbReference type="GeneID" id="533011"/>
<dbReference type="KEGG" id="bta:533011"/>
<dbReference type="CTD" id="64432"/>
<dbReference type="VEuPathDB" id="HostDB:ENSBTAG00000013723"/>
<dbReference type="VGNC" id="VGNC:31665">
    <property type="gene designation" value="MRPS25"/>
</dbReference>
<dbReference type="eggNOG" id="KOG4079">
    <property type="taxonomic scope" value="Eukaryota"/>
</dbReference>
<dbReference type="GeneTree" id="ENSGT00640000091558"/>
<dbReference type="HOGENOM" id="CLU_094727_0_0_1"/>
<dbReference type="InParanoid" id="P82669"/>
<dbReference type="OMA" id="DHKQISQ"/>
<dbReference type="OrthoDB" id="5919182at2759"/>
<dbReference type="TreeFam" id="TF300292"/>
<dbReference type="Reactome" id="R-BTA-5389840">
    <property type="pathway name" value="Mitochondrial translation elongation"/>
</dbReference>
<dbReference type="Reactome" id="R-BTA-5419276">
    <property type="pathway name" value="Mitochondrial translation termination"/>
</dbReference>
<dbReference type="Proteomes" id="UP000009136">
    <property type="component" value="Chromosome 22"/>
</dbReference>
<dbReference type="Bgee" id="ENSBTAG00000013723">
    <property type="expression patterns" value="Expressed in corpus epididymis and 105 other cell types or tissues"/>
</dbReference>
<dbReference type="GO" id="GO:0005743">
    <property type="term" value="C:mitochondrial inner membrane"/>
    <property type="evidence" value="ECO:0000304"/>
    <property type="project" value="Reactome"/>
</dbReference>
<dbReference type="GO" id="GO:0005763">
    <property type="term" value="C:mitochondrial small ribosomal subunit"/>
    <property type="evidence" value="ECO:0000314"/>
    <property type="project" value="UniProtKB"/>
</dbReference>
<dbReference type="GO" id="GO:0005739">
    <property type="term" value="C:mitochondrion"/>
    <property type="evidence" value="ECO:0000318"/>
    <property type="project" value="GO_Central"/>
</dbReference>
<dbReference type="GO" id="GO:0003735">
    <property type="term" value="F:structural constituent of ribosome"/>
    <property type="evidence" value="ECO:0000314"/>
    <property type="project" value="MGI"/>
</dbReference>
<dbReference type="GO" id="GO:0032543">
    <property type="term" value="P:mitochondrial translation"/>
    <property type="evidence" value="ECO:0007005"/>
    <property type="project" value="UniProtKB"/>
</dbReference>
<dbReference type="FunFam" id="3.40.30.10:FF:000103">
    <property type="entry name" value="28S ribosomal protein S25, mitochondrial"/>
    <property type="match status" value="1"/>
</dbReference>
<dbReference type="Gene3D" id="3.40.30.10">
    <property type="entry name" value="Glutaredoxin"/>
    <property type="match status" value="1"/>
</dbReference>
<dbReference type="InterPro" id="IPR007741">
    <property type="entry name" value="Ribosomal_mL43/mS25/NADH_DH"/>
</dbReference>
<dbReference type="InterPro" id="IPR040049">
    <property type="entry name" value="Ribosomal_mS25/mL61"/>
</dbReference>
<dbReference type="InterPro" id="IPR036249">
    <property type="entry name" value="Thioredoxin-like_sf"/>
</dbReference>
<dbReference type="PANTHER" id="PTHR13274">
    <property type="entry name" value="MITOCHONDRIAL RIBOSOMAL PROTEIN S25"/>
    <property type="match status" value="1"/>
</dbReference>
<dbReference type="PANTHER" id="PTHR13274:SF2">
    <property type="entry name" value="SMALL RIBOSOMAL SUBUNIT PROTEIN MS25"/>
    <property type="match status" value="1"/>
</dbReference>
<dbReference type="Pfam" id="PF05047">
    <property type="entry name" value="L51_S25_CI-B8"/>
    <property type="match status" value="1"/>
</dbReference>
<dbReference type="SMART" id="SM00916">
    <property type="entry name" value="L51_S25_CI-B8"/>
    <property type="match status" value="1"/>
</dbReference>
<dbReference type="SUPFAM" id="SSF52833">
    <property type="entry name" value="Thioredoxin-like"/>
    <property type="match status" value="1"/>
</dbReference>
<gene>
    <name type="primary">MRPS25</name>
    <name type="synonym">RPMS25</name>
</gene>
<organism>
    <name type="scientific">Bos taurus</name>
    <name type="common">Bovine</name>
    <dbReference type="NCBI Taxonomy" id="9913"/>
    <lineage>
        <taxon>Eukaryota</taxon>
        <taxon>Metazoa</taxon>
        <taxon>Chordata</taxon>
        <taxon>Craniata</taxon>
        <taxon>Vertebrata</taxon>
        <taxon>Euteleostomi</taxon>
        <taxon>Mammalia</taxon>
        <taxon>Eutheria</taxon>
        <taxon>Laurasiatheria</taxon>
        <taxon>Artiodactyla</taxon>
        <taxon>Ruminantia</taxon>
        <taxon>Pecora</taxon>
        <taxon>Bovidae</taxon>
        <taxon>Bovinae</taxon>
        <taxon>Bos</taxon>
    </lineage>
</organism>